<evidence type="ECO:0000250" key="1"/>
<evidence type="ECO:0000250" key="2">
    <source>
        <dbReference type="UniProtKB" id="Q9H2C0"/>
    </source>
</evidence>
<evidence type="ECO:0000255" key="3"/>
<evidence type="ECO:0000255" key="4">
    <source>
        <dbReference type="PROSITE-ProRule" id="PRU00037"/>
    </source>
</evidence>
<evidence type="ECO:0000269" key="5">
    <source>
    </source>
</evidence>
<evidence type="ECO:0000269" key="6">
    <source>
    </source>
</evidence>
<evidence type="ECO:0000269" key="7">
    <source>
    </source>
</evidence>
<evidence type="ECO:0000269" key="8">
    <source>
    </source>
</evidence>
<evidence type="ECO:0000305" key="9"/>
<evidence type="ECO:0000312" key="10">
    <source>
        <dbReference type="EMBL" id="AAI12433.1"/>
    </source>
</evidence>
<evidence type="ECO:0000312" key="11">
    <source>
        <dbReference type="EMBL" id="BAC30353.1"/>
    </source>
</evidence>
<evidence type="ECO:0000312" key="12">
    <source>
        <dbReference type="MGI" id="MGI:1890619"/>
    </source>
</evidence>
<reference key="1">
    <citation type="journal article" date="2009" name="PLoS Biol.">
        <title>Lineage-specific biology revealed by a finished genome assembly of the mouse.</title>
        <authorList>
            <person name="Church D.M."/>
            <person name="Goodstadt L."/>
            <person name="Hillier L.W."/>
            <person name="Zody M.C."/>
            <person name="Goldstein S."/>
            <person name="She X."/>
            <person name="Bult C.J."/>
            <person name="Agarwala R."/>
            <person name="Cherry J.L."/>
            <person name="DiCuccio M."/>
            <person name="Hlavina W."/>
            <person name="Kapustin Y."/>
            <person name="Meric P."/>
            <person name="Maglott D."/>
            <person name="Birtle Z."/>
            <person name="Marques A.C."/>
            <person name="Graves T."/>
            <person name="Zhou S."/>
            <person name="Teague B."/>
            <person name="Potamousis K."/>
            <person name="Churas C."/>
            <person name="Place M."/>
            <person name="Herschleb J."/>
            <person name="Runnheim R."/>
            <person name="Forrest D."/>
            <person name="Amos-Landgraf J."/>
            <person name="Schwartz D.C."/>
            <person name="Cheng Z."/>
            <person name="Lindblad-Toh K."/>
            <person name="Eichler E.E."/>
            <person name="Ponting C.P."/>
        </authorList>
    </citation>
    <scope>NUCLEOTIDE SEQUENCE [LARGE SCALE GENOMIC DNA]</scope>
    <source>
        <strain>C57BL/6J</strain>
    </source>
</reference>
<reference evidence="9 11" key="2">
    <citation type="journal article" date="2005" name="Science">
        <title>The transcriptional landscape of the mammalian genome.</title>
        <authorList>
            <person name="Carninci P."/>
            <person name="Kasukawa T."/>
            <person name="Katayama S."/>
            <person name="Gough J."/>
            <person name="Frith M.C."/>
            <person name="Maeda N."/>
            <person name="Oyama R."/>
            <person name="Ravasi T."/>
            <person name="Lenhard B."/>
            <person name="Wells C."/>
            <person name="Kodzius R."/>
            <person name="Shimokawa K."/>
            <person name="Bajic V.B."/>
            <person name="Brenner S.E."/>
            <person name="Batalov S."/>
            <person name="Forrest A.R."/>
            <person name="Zavolan M."/>
            <person name="Davis M.J."/>
            <person name="Wilming L.G."/>
            <person name="Aidinis V."/>
            <person name="Allen J.E."/>
            <person name="Ambesi-Impiombato A."/>
            <person name="Apweiler R."/>
            <person name="Aturaliya R.N."/>
            <person name="Bailey T.L."/>
            <person name="Bansal M."/>
            <person name="Baxter L."/>
            <person name="Beisel K.W."/>
            <person name="Bersano T."/>
            <person name="Bono H."/>
            <person name="Chalk A.M."/>
            <person name="Chiu K.P."/>
            <person name="Choudhary V."/>
            <person name="Christoffels A."/>
            <person name="Clutterbuck D.R."/>
            <person name="Crowe M.L."/>
            <person name="Dalla E."/>
            <person name="Dalrymple B.P."/>
            <person name="de Bono B."/>
            <person name="Della Gatta G."/>
            <person name="di Bernardo D."/>
            <person name="Down T."/>
            <person name="Engstrom P."/>
            <person name="Fagiolini M."/>
            <person name="Faulkner G."/>
            <person name="Fletcher C.F."/>
            <person name="Fukushima T."/>
            <person name="Furuno M."/>
            <person name="Futaki S."/>
            <person name="Gariboldi M."/>
            <person name="Georgii-Hemming P."/>
            <person name="Gingeras T.R."/>
            <person name="Gojobori T."/>
            <person name="Green R.E."/>
            <person name="Gustincich S."/>
            <person name="Harbers M."/>
            <person name="Hayashi Y."/>
            <person name="Hensch T.K."/>
            <person name="Hirokawa N."/>
            <person name="Hill D."/>
            <person name="Huminiecki L."/>
            <person name="Iacono M."/>
            <person name="Ikeo K."/>
            <person name="Iwama A."/>
            <person name="Ishikawa T."/>
            <person name="Jakt M."/>
            <person name="Kanapin A."/>
            <person name="Katoh M."/>
            <person name="Kawasawa Y."/>
            <person name="Kelso J."/>
            <person name="Kitamura H."/>
            <person name="Kitano H."/>
            <person name="Kollias G."/>
            <person name="Krishnan S.P."/>
            <person name="Kruger A."/>
            <person name="Kummerfeld S.K."/>
            <person name="Kurochkin I.V."/>
            <person name="Lareau L.F."/>
            <person name="Lazarevic D."/>
            <person name="Lipovich L."/>
            <person name="Liu J."/>
            <person name="Liuni S."/>
            <person name="McWilliam S."/>
            <person name="Madan Babu M."/>
            <person name="Madera M."/>
            <person name="Marchionni L."/>
            <person name="Matsuda H."/>
            <person name="Matsuzawa S."/>
            <person name="Miki H."/>
            <person name="Mignone F."/>
            <person name="Miyake S."/>
            <person name="Morris K."/>
            <person name="Mottagui-Tabar S."/>
            <person name="Mulder N."/>
            <person name="Nakano N."/>
            <person name="Nakauchi H."/>
            <person name="Ng P."/>
            <person name="Nilsson R."/>
            <person name="Nishiguchi S."/>
            <person name="Nishikawa S."/>
            <person name="Nori F."/>
            <person name="Ohara O."/>
            <person name="Okazaki Y."/>
            <person name="Orlando V."/>
            <person name="Pang K.C."/>
            <person name="Pavan W.J."/>
            <person name="Pavesi G."/>
            <person name="Pesole G."/>
            <person name="Petrovsky N."/>
            <person name="Piazza S."/>
            <person name="Reed J."/>
            <person name="Reid J.F."/>
            <person name="Ring B.Z."/>
            <person name="Ringwald M."/>
            <person name="Rost B."/>
            <person name="Ruan Y."/>
            <person name="Salzberg S.L."/>
            <person name="Sandelin A."/>
            <person name="Schneider C."/>
            <person name="Schoenbach C."/>
            <person name="Sekiguchi K."/>
            <person name="Semple C.A."/>
            <person name="Seno S."/>
            <person name="Sessa L."/>
            <person name="Sheng Y."/>
            <person name="Shibata Y."/>
            <person name="Shimada H."/>
            <person name="Shimada K."/>
            <person name="Silva D."/>
            <person name="Sinclair B."/>
            <person name="Sperling S."/>
            <person name="Stupka E."/>
            <person name="Sugiura K."/>
            <person name="Sultana R."/>
            <person name="Takenaka Y."/>
            <person name="Taki K."/>
            <person name="Tammoja K."/>
            <person name="Tan S.L."/>
            <person name="Tang S."/>
            <person name="Taylor M.S."/>
            <person name="Tegner J."/>
            <person name="Teichmann S.A."/>
            <person name="Ueda H.R."/>
            <person name="van Nimwegen E."/>
            <person name="Verardo R."/>
            <person name="Wei C.L."/>
            <person name="Yagi K."/>
            <person name="Yamanishi H."/>
            <person name="Zabarovsky E."/>
            <person name="Zhu S."/>
            <person name="Zimmer A."/>
            <person name="Hide W."/>
            <person name="Bult C."/>
            <person name="Grimmond S.M."/>
            <person name="Teasdale R.D."/>
            <person name="Liu E.T."/>
            <person name="Brusic V."/>
            <person name="Quackenbush J."/>
            <person name="Wahlestedt C."/>
            <person name="Mattick J.S."/>
            <person name="Hume D.A."/>
            <person name="Kai C."/>
            <person name="Sasaki D."/>
            <person name="Tomaru Y."/>
            <person name="Fukuda S."/>
            <person name="Kanamori-Katayama M."/>
            <person name="Suzuki M."/>
            <person name="Aoki J."/>
            <person name="Arakawa T."/>
            <person name="Iida J."/>
            <person name="Imamura K."/>
            <person name="Itoh M."/>
            <person name="Kato T."/>
            <person name="Kawaji H."/>
            <person name="Kawagashira N."/>
            <person name="Kawashima T."/>
            <person name="Kojima M."/>
            <person name="Kondo S."/>
            <person name="Konno H."/>
            <person name="Nakano K."/>
            <person name="Ninomiya N."/>
            <person name="Nishio T."/>
            <person name="Okada M."/>
            <person name="Plessy C."/>
            <person name="Shibata K."/>
            <person name="Shiraki T."/>
            <person name="Suzuki S."/>
            <person name="Tagami M."/>
            <person name="Waki K."/>
            <person name="Watahiki A."/>
            <person name="Okamura-Oho Y."/>
            <person name="Suzuki H."/>
            <person name="Kawai J."/>
            <person name="Hayashizaki Y."/>
        </authorList>
    </citation>
    <scope>NUCLEOTIDE SEQUENCE [LARGE SCALE MRNA] OF 2-597</scope>
    <source>
        <strain evidence="11">C57BL/6J</strain>
        <tissue evidence="11">Spinal cord</tissue>
    </source>
</reference>
<reference evidence="9 10" key="3">
    <citation type="journal article" date="2004" name="Genome Res.">
        <title>The status, quality, and expansion of the NIH full-length cDNA project: the Mammalian Gene Collection (MGC).</title>
        <authorList>
            <consortium name="The MGC Project Team"/>
        </authorList>
    </citation>
    <scope>NUCLEOTIDE SEQUENCE [LARGE SCALE MRNA] OF 2-597</scope>
</reference>
<reference evidence="9" key="4">
    <citation type="journal article" date="2002" name="J. Cell Biol.">
        <title>Microtubule-associated protein 1B: a neuronal binding partner for gigaxonin.</title>
        <authorList>
            <person name="Ding J."/>
            <person name="Liu J.-J."/>
            <person name="Kowal A.S."/>
            <person name="Nardine T."/>
            <person name="Bhattacharya P."/>
            <person name="Lee A."/>
            <person name="Yang Y."/>
        </authorList>
    </citation>
    <scope>INTERACTION WITH MAP1B</scope>
    <scope>SUBCELLULAR LOCATION</scope>
    <scope>TISSUE SPECIFICITY</scope>
</reference>
<reference evidence="9" key="5">
    <citation type="journal article" date="2005" name="Nature">
        <title>Gigaxonin-controlled degradation of MAP1B light chain is critical to neuronal survival.</title>
        <authorList>
            <person name="Allen E."/>
            <person name="Ding J."/>
            <person name="Wang W."/>
            <person name="Pramanik S."/>
            <person name="Chou J."/>
            <person name="Yau V."/>
            <person name="Yang Y."/>
        </authorList>
    </citation>
    <scope>FUNCTION</scope>
</reference>
<reference evidence="9" key="6">
    <citation type="journal article" date="2006" name="Hum. Mol. Genet.">
        <title>Gene targeting of GAN in mouse causes a toxic accumulation of microtubule-associated protein 8 and impaired retrograde axonal transport.</title>
        <authorList>
            <person name="Ding J."/>
            <person name="Allen E."/>
            <person name="Wang W."/>
            <person name="Valle A."/>
            <person name="Wu C."/>
            <person name="Nardine T."/>
            <person name="Cui B."/>
            <person name="Yi J."/>
            <person name="Taylor A."/>
            <person name="Jeon N.L."/>
            <person name="Chu S."/>
            <person name="So Y."/>
            <person name="Vogel H."/>
            <person name="Tolwani R."/>
            <person name="Mobley W."/>
            <person name="Yang Y."/>
        </authorList>
    </citation>
    <scope>FUNCTION</scope>
    <scope>INTERACTION WITH MAP1S</scope>
    <scope>DISRUPTION PHENOTYPE</scope>
</reference>
<reference evidence="9" key="7">
    <citation type="journal article" date="2008" name="J. Neurochem.">
        <title>Modest loss of peripheral axons, muscle atrophy and formation of brain inclusions in mice with targeted deletion of gigaxonin exon 1.</title>
        <authorList>
            <person name="Dequen F."/>
            <person name="Bomont P."/>
            <person name="Gowing G."/>
            <person name="Cleveland D.W."/>
            <person name="Julien J.-P."/>
        </authorList>
    </citation>
    <scope>DISRUPTION PHENOTYPE</scope>
</reference>
<sequence length="597" mass="67671">MAEGSAVSDPQHAARLLRALSSFREEARFCDAHLVLDGEEIPVQKNILAAASPYIRTKLNYNPPKDDGSTYKIELEGISVMVMREILDYIFSGQIRLNEDTIQDVVQAADLLLLTDLKTLCCEFLEGCIAAENCIGIRDFALHYCLHHVHYLATEYLETHFRDVSSTEEFLELSPQKLKEVISLEKLNVGNERYVFEAVIRWIAHDVEMRKVHMKDVMSALWVSGLDSSYLREQMLNEPLVREIVKECSNIPLSQPQQGEAMLASFKPRGYSECIVTIGGEERVSRKPTAAMRCMCPLYDPNRQLWIELAPLSMPRINHGVLSAEGFLFVLGGQDENKQTLSSGEKYDPDANTWTALPPMHEARHNFGIVEIDGMLYILGGEDGDRELISMECYDIYSKTWTKQPDLTMVRKIGCYAAMKKKIYAMGGGSYGKLFESVECYDPRTQQWTAICPLKERRFGAVACGVAMELYVFGGVRSREDIQGSEMVTCKSEFYHDEFKRWIYLNDQNLCIPASSSFVYGAVPIGASIYVIGDLDTGTNYDYVREFKRSTGTWHHTKPLLPSDLRRTGCAALRIANCKLFRLQLQQGLFRIRVHSP</sequence>
<comment type="function">
    <text evidence="1 6 7">Probable cytoskeletal component that directly or indirectly plays an important role in neurofilament architecture. May act as a substrate-specific adapter of an E3 ubiquitin-protein ligase complex which mediates the ubiquitination and subsequent proteasomal degradation of target proteins. Controls degradation of TBCB (By similarity). Controls degradation of MAP1B and MAP1S, and is critical for neuronal maintenance and survival.</text>
</comment>
<comment type="pathway">
    <text evidence="2">Protein modification; protein ubiquitination.</text>
</comment>
<comment type="subunit">
    <text evidence="2 5 7">Interacts with TBCB. Interacts with CUL3. Part of a complex that contains CUL3, RBX1 and GAN. Interacts (via BTB domain) with UBA1 (By similarity). Interacts (via Kelch domains) with MAP1B (via C-terminus) and MAP1S (via C-terminus).</text>
</comment>
<comment type="subcellular location">
    <subcellularLocation>
        <location evidence="1">Cytoplasm</location>
    </subcellularLocation>
    <subcellularLocation>
        <location evidence="5">Cytoplasm</location>
        <location evidence="5">Cytoskeleton</location>
    </subcellularLocation>
</comment>
<comment type="tissue specificity">
    <text evidence="5">Expressed in brain, heart and muscle (at protein level).</text>
</comment>
<comment type="PTM">
    <text evidence="1">Ubiquitinated by E3 ubiquitin ligase complex formed by CUL3 and RBX1 and probably targeted for proteasome-independent degradation.</text>
</comment>
<comment type="disruption phenotype">
    <text evidence="7 8">Mice have a relatively normal life span. However, they display deterioration in motor function with onset varying from 6 to 10 months as well as abnormalities in non-neuronal tissues. The prominent pathological features include limb weakness, muscular atrophy, axonal degeneration, neurofilament accumulation, an abnormal microtubule network, mitochondrial swelling and thinned myelin sheaths.</text>
</comment>
<keyword id="KW-0963">Cytoplasm</keyword>
<keyword id="KW-0206">Cytoskeleton</keyword>
<keyword id="KW-0880">Kelch repeat</keyword>
<keyword id="KW-0523">Neurodegeneration</keyword>
<keyword id="KW-1185">Reference proteome</keyword>
<keyword id="KW-0677">Repeat</keyword>
<keyword id="KW-0832">Ubl conjugation</keyword>
<keyword id="KW-0833">Ubl conjugation pathway</keyword>
<protein>
    <recommendedName>
        <fullName evidence="12">Gigaxonin</fullName>
    </recommendedName>
</protein>
<feature type="chain" id="PRO_0000358592" description="Gigaxonin">
    <location>
        <begin position="1"/>
        <end position="597"/>
    </location>
</feature>
<feature type="domain" description="BTB" evidence="4">
    <location>
        <begin position="30"/>
        <end position="99"/>
    </location>
</feature>
<feature type="domain" description="BACK" evidence="3">
    <location>
        <begin position="134"/>
        <end position="236"/>
    </location>
</feature>
<feature type="repeat" description="Kelch 1" evidence="3">
    <location>
        <begin position="274"/>
        <end position="326"/>
    </location>
</feature>
<feature type="repeat" description="Kelch 2" evidence="3">
    <location>
        <begin position="327"/>
        <end position="374"/>
    </location>
</feature>
<feature type="repeat" description="Kelch 3" evidence="3">
    <location>
        <begin position="376"/>
        <end position="421"/>
    </location>
</feature>
<feature type="repeat" description="Kelch 4" evidence="3">
    <location>
        <begin position="422"/>
        <end position="468"/>
    </location>
</feature>
<feature type="repeat" description="Kelch 5" evidence="3">
    <location>
        <begin position="470"/>
        <end position="522"/>
    </location>
</feature>
<feature type="repeat" description="Kelch 6" evidence="3">
    <location>
        <begin position="528"/>
        <end position="574"/>
    </location>
</feature>
<dbReference type="EMBL" id="AC121116">
    <property type="status" value="NOT_ANNOTATED_CDS"/>
    <property type="molecule type" value="mRNA"/>
</dbReference>
<dbReference type="EMBL" id="AK039455">
    <property type="protein sequence ID" value="BAC30353.1"/>
    <property type="molecule type" value="mRNA"/>
</dbReference>
<dbReference type="EMBL" id="BC112432">
    <property type="protein sequence ID" value="AAI12433.1"/>
    <property type="molecule type" value="mRNA"/>
</dbReference>
<dbReference type="CCDS" id="CCDS40490.1"/>
<dbReference type="RefSeq" id="NP_001074620.1">
    <property type="nucleotide sequence ID" value="NM_001081151.2"/>
</dbReference>
<dbReference type="SMR" id="Q8CA72"/>
<dbReference type="BioGRID" id="229062">
    <property type="interactions" value="9"/>
</dbReference>
<dbReference type="FunCoup" id="Q8CA72">
    <property type="interactions" value="643"/>
</dbReference>
<dbReference type="IntAct" id="Q8CA72">
    <property type="interactions" value="1"/>
</dbReference>
<dbReference type="MINT" id="Q8CA72"/>
<dbReference type="STRING" id="10090.ENSMUSP00000070168"/>
<dbReference type="iPTMnet" id="Q8CA72"/>
<dbReference type="PhosphoSitePlus" id="Q8CA72"/>
<dbReference type="PaxDb" id="10090-ENSMUSP00000124904"/>
<dbReference type="PeptideAtlas" id="Q8CA72"/>
<dbReference type="ProteomicsDB" id="273026"/>
<dbReference type="Pumba" id="Q8CA72"/>
<dbReference type="Antibodypedia" id="71668">
    <property type="antibodies" value="128 antibodies from 23 providers"/>
</dbReference>
<dbReference type="DNASU" id="209239"/>
<dbReference type="Ensembl" id="ENSMUST00000064488.11">
    <property type="protein sequence ID" value="ENSMUSP00000070168.5"/>
    <property type="gene ID" value="ENSMUSG00000052557.12"/>
</dbReference>
<dbReference type="GeneID" id="209239"/>
<dbReference type="KEGG" id="mmu:209239"/>
<dbReference type="UCSC" id="uc009nox.1">
    <property type="organism name" value="mouse"/>
</dbReference>
<dbReference type="AGR" id="MGI:1890619"/>
<dbReference type="CTD" id="8139"/>
<dbReference type="MGI" id="MGI:1890619">
    <property type="gene designation" value="Gan"/>
</dbReference>
<dbReference type="VEuPathDB" id="HostDB:ENSMUSG00000052557"/>
<dbReference type="eggNOG" id="KOG4441">
    <property type="taxonomic scope" value="Eukaryota"/>
</dbReference>
<dbReference type="GeneTree" id="ENSGT00940000155273"/>
<dbReference type="InParanoid" id="Q8CA72"/>
<dbReference type="OMA" id="QHVHYVA"/>
<dbReference type="OrthoDB" id="45365at2759"/>
<dbReference type="PhylomeDB" id="Q8CA72"/>
<dbReference type="TreeFam" id="TF329218"/>
<dbReference type="Reactome" id="R-MMU-8951664">
    <property type="pathway name" value="Neddylation"/>
</dbReference>
<dbReference type="Reactome" id="R-MMU-983168">
    <property type="pathway name" value="Antigen processing: Ubiquitination &amp; Proteasome degradation"/>
</dbReference>
<dbReference type="UniPathway" id="UPA00143"/>
<dbReference type="BioGRID-ORCS" id="209239">
    <property type="hits" value="3 hits in 77 CRISPR screens"/>
</dbReference>
<dbReference type="ChiTaRS" id="Gan">
    <property type="organism name" value="mouse"/>
</dbReference>
<dbReference type="PRO" id="PR:Q8CA72"/>
<dbReference type="Proteomes" id="UP000000589">
    <property type="component" value="Chromosome 8"/>
</dbReference>
<dbReference type="RNAct" id="Q8CA72">
    <property type="molecule type" value="protein"/>
</dbReference>
<dbReference type="Bgee" id="ENSMUSG00000052557">
    <property type="expression patterns" value="Expressed in lumbar dorsal root ganglion and 216 other cell types or tissues"/>
</dbReference>
<dbReference type="ExpressionAtlas" id="Q8CA72">
    <property type="expression patterns" value="baseline and differential"/>
</dbReference>
<dbReference type="GO" id="GO:0031463">
    <property type="term" value="C:Cul3-RING ubiquitin ligase complex"/>
    <property type="evidence" value="ECO:0000250"/>
    <property type="project" value="UniProtKB"/>
</dbReference>
<dbReference type="GO" id="GO:0005737">
    <property type="term" value="C:cytoplasm"/>
    <property type="evidence" value="ECO:0007669"/>
    <property type="project" value="UniProtKB-SubCell"/>
</dbReference>
<dbReference type="GO" id="GO:0005856">
    <property type="term" value="C:cytoskeleton"/>
    <property type="evidence" value="ECO:0007669"/>
    <property type="project" value="UniProtKB-SubCell"/>
</dbReference>
<dbReference type="GO" id="GO:0007010">
    <property type="term" value="P:cytoskeleton organization"/>
    <property type="evidence" value="ECO:0000266"/>
    <property type="project" value="MGI"/>
</dbReference>
<dbReference type="GO" id="GO:0016567">
    <property type="term" value="P:protein ubiquitination"/>
    <property type="evidence" value="ECO:0000250"/>
    <property type="project" value="UniProtKB"/>
</dbReference>
<dbReference type="CDD" id="cd18455">
    <property type="entry name" value="BACK_KLHL16_gigaxonin"/>
    <property type="match status" value="1"/>
</dbReference>
<dbReference type="CDD" id="cd18245">
    <property type="entry name" value="BTB_POZ_KLHL16_gigaxonin"/>
    <property type="match status" value="1"/>
</dbReference>
<dbReference type="FunFam" id="2.120.10.80:FF:000032">
    <property type="entry name" value="Gigaxonin"/>
    <property type="match status" value="1"/>
</dbReference>
<dbReference type="FunFam" id="3.30.710.10:FF:000108">
    <property type="entry name" value="gigaxonin isoform X1"/>
    <property type="match status" value="1"/>
</dbReference>
<dbReference type="FunFam" id="1.25.40.420:FF:000011">
    <property type="entry name" value="gigaxonin isoform X2"/>
    <property type="match status" value="1"/>
</dbReference>
<dbReference type="Gene3D" id="1.25.40.420">
    <property type="match status" value="1"/>
</dbReference>
<dbReference type="Gene3D" id="2.120.10.80">
    <property type="entry name" value="Kelch-type beta propeller"/>
    <property type="match status" value="1"/>
</dbReference>
<dbReference type="Gene3D" id="3.30.710.10">
    <property type="entry name" value="Potassium Channel Kv1.1, Chain A"/>
    <property type="match status" value="1"/>
</dbReference>
<dbReference type="InterPro" id="IPR011705">
    <property type="entry name" value="BACK"/>
</dbReference>
<dbReference type="InterPro" id="IPR017096">
    <property type="entry name" value="BTB-kelch_protein"/>
</dbReference>
<dbReference type="InterPro" id="IPR000210">
    <property type="entry name" value="BTB/POZ_dom"/>
</dbReference>
<dbReference type="InterPro" id="IPR015915">
    <property type="entry name" value="Kelch-typ_b-propeller"/>
</dbReference>
<dbReference type="InterPro" id="IPR006652">
    <property type="entry name" value="Kelch_1"/>
</dbReference>
<dbReference type="InterPro" id="IPR030579">
    <property type="entry name" value="KLHL16_BACK"/>
</dbReference>
<dbReference type="InterPro" id="IPR047070">
    <property type="entry name" value="KLHL16_BTB_POZ"/>
</dbReference>
<dbReference type="InterPro" id="IPR011333">
    <property type="entry name" value="SKP1/BTB/POZ_sf"/>
</dbReference>
<dbReference type="PANTHER" id="PTHR45632:SF17">
    <property type="entry name" value="KELCH-LIKE PROTEIN 31"/>
    <property type="match status" value="1"/>
</dbReference>
<dbReference type="PANTHER" id="PTHR45632">
    <property type="entry name" value="LD33804P"/>
    <property type="match status" value="1"/>
</dbReference>
<dbReference type="Pfam" id="PF07707">
    <property type="entry name" value="BACK"/>
    <property type="match status" value="1"/>
</dbReference>
<dbReference type="Pfam" id="PF00651">
    <property type="entry name" value="BTB"/>
    <property type="match status" value="1"/>
</dbReference>
<dbReference type="Pfam" id="PF24681">
    <property type="entry name" value="Kelch_KLHDC2_KLHL20_DRC7"/>
    <property type="match status" value="1"/>
</dbReference>
<dbReference type="PIRSF" id="PIRSF037037">
    <property type="entry name" value="Kelch-like_protein_gigaxonin"/>
    <property type="match status" value="1"/>
</dbReference>
<dbReference type="SMART" id="SM00875">
    <property type="entry name" value="BACK"/>
    <property type="match status" value="1"/>
</dbReference>
<dbReference type="SMART" id="SM00225">
    <property type="entry name" value="BTB"/>
    <property type="match status" value="1"/>
</dbReference>
<dbReference type="SMART" id="SM00612">
    <property type="entry name" value="Kelch"/>
    <property type="match status" value="5"/>
</dbReference>
<dbReference type="SUPFAM" id="SSF117281">
    <property type="entry name" value="Kelch motif"/>
    <property type="match status" value="1"/>
</dbReference>
<dbReference type="SUPFAM" id="SSF54695">
    <property type="entry name" value="POZ domain"/>
    <property type="match status" value="1"/>
</dbReference>
<dbReference type="PROSITE" id="PS50097">
    <property type="entry name" value="BTB"/>
    <property type="match status" value="1"/>
</dbReference>
<organism>
    <name type="scientific">Mus musculus</name>
    <name type="common">Mouse</name>
    <dbReference type="NCBI Taxonomy" id="10090"/>
    <lineage>
        <taxon>Eukaryota</taxon>
        <taxon>Metazoa</taxon>
        <taxon>Chordata</taxon>
        <taxon>Craniata</taxon>
        <taxon>Vertebrata</taxon>
        <taxon>Euteleostomi</taxon>
        <taxon>Mammalia</taxon>
        <taxon>Eutheria</taxon>
        <taxon>Euarchontoglires</taxon>
        <taxon>Glires</taxon>
        <taxon>Rodentia</taxon>
        <taxon>Myomorpha</taxon>
        <taxon>Muroidea</taxon>
        <taxon>Muridae</taxon>
        <taxon>Murinae</taxon>
        <taxon>Mus</taxon>
        <taxon>Mus</taxon>
    </lineage>
</organism>
<gene>
    <name evidence="12" type="primary">Gan</name>
</gene>
<accession>Q8CA72</accession>
<proteinExistence type="evidence at protein level"/>
<name>GAN_MOUSE</name>